<comment type="function">
    <text evidence="1">Catalyzes the condensation of ATP and 5-phosphoribose 1-diphosphate to form N'-(5'-phosphoribosyl)-ATP (PR-ATP). Has a crucial role in the pathway because the rate of histidine biosynthesis seems to be controlled primarily by regulation of HisG enzymatic activity (By similarity).</text>
</comment>
<comment type="catalytic activity">
    <reaction>
        <text>1-(5-phospho-beta-D-ribosyl)-ATP + diphosphate = 5-phospho-alpha-D-ribose 1-diphosphate + ATP</text>
        <dbReference type="Rhea" id="RHEA:18473"/>
        <dbReference type="ChEBI" id="CHEBI:30616"/>
        <dbReference type="ChEBI" id="CHEBI:33019"/>
        <dbReference type="ChEBI" id="CHEBI:58017"/>
        <dbReference type="ChEBI" id="CHEBI:73183"/>
        <dbReference type="EC" id="2.4.2.17"/>
    </reaction>
</comment>
<comment type="cofactor">
    <cofactor evidence="1">
        <name>Mg(2+)</name>
        <dbReference type="ChEBI" id="CHEBI:18420"/>
    </cofactor>
</comment>
<comment type="activity regulation">
    <text evidence="1">Feedback inhibited by histidine.</text>
</comment>
<comment type="pathway">
    <text>Amino-acid biosynthesis; L-histidine biosynthesis; L-histidine from 5-phospho-alpha-D-ribose 1-diphosphate: step 1/9.</text>
</comment>
<comment type="subcellular location">
    <subcellularLocation>
        <location evidence="1">Cytoplasm</location>
    </subcellularLocation>
</comment>
<comment type="similarity">
    <text evidence="2">Belongs to the ATP phosphoribosyltransferase family. Long subfamily.</text>
</comment>
<protein>
    <recommendedName>
        <fullName>ATP phosphoribosyltransferase</fullName>
        <shortName>ATP-PRT</shortName>
        <shortName>ATP-PRTase</shortName>
        <ecNumber>2.4.2.17</ecNumber>
    </recommendedName>
</protein>
<accession>O27550</accession>
<sequence>MKIRIAVPSKGRISEPAIRLLENAGVGLKDTVNRKLFSKTQHPQIEVMFSRAADIPEFVADGAADLGITGYDLIVERGSDVEILEDLKYGRASLVLAAPEDSTIRGPEDIPRGAVIATEFPGITENYLREHGIDAEVVELTGSTEIAPFIGVADLITDLSSTGTTLRMNHLRVIDTILESSVKLIANRESYATKSGIIEELRTGIRGVIDAEGKRLVMLNIDRKNLDRVRALMPGMTGPTVSEVLSDNGVVAVHAVVDEKEVFNLINRLKAVGARDILVVPIERIIP</sequence>
<evidence type="ECO:0000250" key="1"/>
<evidence type="ECO:0000305" key="2"/>
<evidence type="ECO:0007829" key="3">
    <source>
        <dbReference type="PDB" id="2VD3"/>
    </source>
</evidence>
<reference key="1">
    <citation type="journal article" date="1997" name="J. Bacteriol.">
        <title>Complete genome sequence of Methanobacterium thermoautotrophicum deltaH: functional analysis and comparative genomics.</title>
        <authorList>
            <person name="Smith D.R."/>
            <person name="Doucette-Stamm L.A."/>
            <person name="Deloughery C."/>
            <person name="Lee H.-M."/>
            <person name="Dubois J."/>
            <person name="Aldredge T."/>
            <person name="Bashirzadeh R."/>
            <person name="Blakely D."/>
            <person name="Cook R."/>
            <person name="Gilbert K."/>
            <person name="Harrison D."/>
            <person name="Hoang L."/>
            <person name="Keagle P."/>
            <person name="Lumm W."/>
            <person name="Pothier B."/>
            <person name="Qiu D."/>
            <person name="Spadafora R."/>
            <person name="Vicare R."/>
            <person name="Wang Y."/>
            <person name="Wierzbowski J."/>
            <person name="Gibson R."/>
            <person name="Jiwani N."/>
            <person name="Caruso A."/>
            <person name="Bush D."/>
            <person name="Safer H."/>
            <person name="Patwell D."/>
            <person name="Prabhakar S."/>
            <person name="McDougall S."/>
            <person name="Shimer G."/>
            <person name="Goyal A."/>
            <person name="Pietrovski S."/>
            <person name="Church G.M."/>
            <person name="Daniels C.J."/>
            <person name="Mao J.-I."/>
            <person name="Rice P."/>
            <person name="Noelling J."/>
            <person name="Reeve J.N."/>
        </authorList>
    </citation>
    <scope>NUCLEOTIDE SEQUENCE [LARGE SCALE GENOMIC DNA]</scope>
    <source>
        <strain>ATCC 29096 / DSM 1053 / JCM 10044 / NBRC 100330 / Delta H</strain>
    </source>
</reference>
<feature type="chain" id="PRO_0000151886" description="ATP phosphoribosyltransferase">
    <location>
        <begin position="1"/>
        <end position="287"/>
    </location>
</feature>
<feature type="strand" evidence="3">
    <location>
        <begin position="3"/>
        <end position="11"/>
    </location>
</feature>
<feature type="helix" evidence="3">
    <location>
        <begin position="14"/>
        <end position="23"/>
    </location>
</feature>
<feature type="strand" evidence="3">
    <location>
        <begin position="28"/>
        <end position="30"/>
    </location>
</feature>
<feature type="strand" evidence="3">
    <location>
        <begin position="36"/>
        <end position="42"/>
    </location>
</feature>
<feature type="strand" evidence="3">
    <location>
        <begin position="45"/>
        <end position="50"/>
    </location>
</feature>
<feature type="turn" evidence="3">
    <location>
        <begin position="52"/>
        <end position="54"/>
    </location>
</feature>
<feature type="helix" evidence="3">
    <location>
        <begin position="55"/>
        <end position="60"/>
    </location>
</feature>
<feature type="strand" evidence="3">
    <location>
        <begin position="63"/>
        <end position="70"/>
    </location>
</feature>
<feature type="helix" evidence="3">
    <location>
        <begin position="71"/>
        <end position="77"/>
    </location>
</feature>
<feature type="strand" evidence="3">
    <location>
        <begin position="82"/>
        <end position="86"/>
    </location>
</feature>
<feature type="strand" evidence="3">
    <location>
        <begin position="92"/>
        <end position="99"/>
    </location>
</feature>
<feature type="helix" evidence="3">
    <location>
        <begin position="107"/>
        <end position="109"/>
    </location>
</feature>
<feature type="strand" evidence="3">
    <location>
        <begin position="115"/>
        <end position="119"/>
    </location>
</feature>
<feature type="helix" evidence="3">
    <location>
        <begin position="121"/>
        <end position="130"/>
    </location>
</feature>
<feature type="strand" evidence="3">
    <location>
        <begin position="136"/>
        <end position="139"/>
    </location>
</feature>
<feature type="helix" evidence="3">
    <location>
        <begin position="144"/>
        <end position="146"/>
    </location>
</feature>
<feature type="turn" evidence="3">
    <location>
        <begin position="147"/>
        <end position="151"/>
    </location>
</feature>
<feature type="strand" evidence="3">
    <location>
        <begin position="154"/>
        <end position="162"/>
    </location>
</feature>
<feature type="helix" evidence="3">
    <location>
        <begin position="164"/>
        <end position="168"/>
    </location>
</feature>
<feature type="strand" evidence="3">
    <location>
        <begin position="171"/>
        <end position="180"/>
    </location>
</feature>
<feature type="strand" evidence="3">
    <location>
        <begin position="182"/>
        <end position="186"/>
    </location>
</feature>
<feature type="helix" evidence="3">
    <location>
        <begin position="188"/>
        <end position="193"/>
    </location>
</feature>
<feature type="helix" evidence="3">
    <location>
        <begin position="195"/>
        <end position="210"/>
    </location>
</feature>
<feature type="turn" evidence="3">
    <location>
        <begin position="211"/>
        <end position="213"/>
    </location>
</feature>
<feature type="strand" evidence="3">
    <location>
        <begin position="214"/>
        <end position="222"/>
    </location>
</feature>
<feature type="helix" evidence="3">
    <location>
        <begin position="223"/>
        <end position="225"/>
    </location>
</feature>
<feature type="helix" evidence="3">
    <location>
        <begin position="226"/>
        <end position="232"/>
    </location>
</feature>
<feature type="strand" evidence="3">
    <location>
        <begin position="236"/>
        <end position="238"/>
    </location>
</feature>
<feature type="strand" evidence="3">
    <location>
        <begin position="240"/>
        <end position="243"/>
    </location>
</feature>
<feature type="strand" evidence="3">
    <location>
        <begin position="246"/>
        <end position="248"/>
    </location>
</feature>
<feature type="strand" evidence="3">
    <location>
        <begin position="250"/>
        <end position="258"/>
    </location>
</feature>
<feature type="turn" evidence="3">
    <location>
        <begin position="259"/>
        <end position="261"/>
    </location>
</feature>
<feature type="helix" evidence="3">
    <location>
        <begin position="262"/>
        <end position="270"/>
    </location>
</feature>
<feature type="turn" evidence="3">
    <location>
        <begin position="271"/>
        <end position="273"/>
    </location>
</feature>
<feature type="strand" evidence="3">
    <location>
        <begin position="275"/>
        <end position="281"/>
    </location>
</feature>
<gene>
    <name type="primary">hisG</name>
    <name type="ordered locus">MTH_1506</name>
</gene>
<proteinExistence type="evidence at protein level"/>
<name>HIS1_METTH</name>
<organism>
    <name type="scientific">Methanothermobacter thermautotrophicus (strain ATCC 29096 / DSM 1053 / JCM 10044 / NBRC 100330 / Delta H)</name>
    <name type="common">Methanobacterium thermoautotrophicum</name>
    <dbReference type="NCBI Taxonomy" id="187420"/>
    <lineage>
        <taxon>Archaea</taxon>
        <taxon>Methanobacteriati</taxon>
        <taxon>Methanobacteriota</taxon>
        <taxon>Methanomada group</taxon>
        <taxon>Methanobacteria</taxon>
        <taxon>Methanobacteriales</taxon>
        <taxon>Methanobacteriaceae</taxon>
        <taxon>Methanothermobacter</taxon>
    </lineage>
</organism>
<keyword id="KW-0002">3D-structure</keyword>
<keyword id="KW-0028">Amino-acid biosynthesis</keyword>
<keyword id="KW-0067">ATP-binding</keyword>
<keyword id="KW-0963">Cytoplasm</keyword>
<keyword id="KW-0328">Glycosyltransferase</keyword>
<keyword id="KW-0368">Histidine biosynthesis</keyword>
<keyword id="KW-0460">Magnesium</keyword>
<keyword id="KW-0479">Metal-binding</keyword>
<keyword id="KW-0547">Nucleotide-binding</keyword>
<keyword id="KW-1185">Reference proteome</keyword>
<keyword id="KW-0808">Transferase</keyword>
<dbReference type="EC" id="2.4.2.17"/>
<dbReference type="EMBL" id="AE000666">
    <property type="protein sequence ID" value="AAB85981.1"/>
    <property type="molecule type" value="Genomic_DNA"/>
</dbReference>
<dbReference type="PIR" id="H69067">
    <property type="entry name" value="H69067"/>
</dbReference>
<dbReference type="RefSeq" id="WP_010877116.1">
    <property type="nucleotide sequence ID" value="NC_000916.1"/>
</dbReference>
<dbReference type="PDB" id="2VD3">
    <property type="method" value="X-ray"/>
    <property type="resolution" value="2.45 A"/>
    <property type="chains" value="A/B=2-287"/>
</dbReference>
<dbReference type="PDBsum" id="2VD3"/>
<dbReference type="SMR" id="O27550"/>
<dbReference type="FunCoup" id="O27550">
    <property type="interactions" value="152"/>
</dbReference>
<dbReference type="STRING" id="187420.MTH_1506"/>
<dbReference type="PaxDb" id="187420-MTH_1506"/>
<dbReference type="EnsemblBacteria" id="AAB85981">
    <property type="protein sequence ID" value="AAB85981"/>
    <property type="gene ID" value="MTH_1506"/>
</dbReference>
<dbReference type="GeneID" id="77402025"/>
<dbReference type="KEGG" id="mth:MTH_1506"/>
<dbReference type="PATRIC" id="fig|187420.15.peg.1469"/>
<dbReference type="HOGENOM" id="CLU_038115_1_0_2"/>
<dbReference type="InParanoid" id="O27550"/>
<dbReference type="UniPathway" id="UPA00031">
    <property type="reaction ID" value="UER00006"/>
</dbReference>
<dbReference type="EvolutionaryTrace" id="O27550"/>
<dbReference type="Proteomes" id="UP000005223">
    <property type="component" value="Chromosome"/>
</dbReference>
<dbReference type="GO" id="GO:0005737">
    <property type="term" value="C:cytoplasm"/>
    <property type="evidence" value="ECO:0007669"/>
    <property type="project" value="UniProtKB-SubCell"/>
</dbReference>
<dbReference type="GO" id="GO:0005524">
    <property type="term" value="F:ATP binding"/>
    <property type="evidence" value="ECO:0007669"/>
    <property type="project" value="UniProtKB-KW"/>
</dbReference>
<dbReference type="GO" id="GO:0003879">
    <property type="term" value="F:ATP phosphoribosyltransferase activity"/>
    <property type="evidence" value="ECO:0007669"/>
    <property type="project" value="UniProtKB-UniRule"/>
</dbReference>
<dbReference type="GO" id="GO:0000287">
    <property type="term" value="F:magnesium ion binding"/>
    <property type="evidence" value="ECO:0007669"/>
    <property type="project" value="UniProtKB-UniRule"/>
</dbReference>
<dbReference type="GO" id="GO:0000105">
    <property type="term" value="P:L-histidine biosynthetic process"/>
    <property type="evidence" value="ECO:0007669"/>
    <property type="project" value="UniProtKB-UniRule"/>
</dbReference>
<dbReference type="CDD" id="cd13594">
    <property type="entry name" value="PBP2_HisGL4"/>
    <property type="match status" value="1"/>
</dbReference>
<dbReference type="FunFam" id="3.30.70.120:FF:000002">
    <property type="entry name" value="ATP phosphoribosyltransferase"/>
    <property type="match status" value="1"/>
</dbReference>
<dbReference type="FunFam" id="3.40.190.10:FF:000082">
    <property type="entry name" value="ATP phosphoribosyltransferase"/>
    <property type="match status" value="1"/>
</dbReference>
<dbReference type="Gene3D" id="3.30.70.120">
    <property type="match status" value="1"/>
</dbReference>
<dbReference type="Gene3D" id="3.40.190.10">
    <property type="entry name" value="Periplasmic binding protein-like II"/>
    <property type="match status" value="2"/>
</dbReference>
<dbReference type="HAMAP" id="MF_00079">
    <property type="entry name" value="HisG_Long"/>
    <property type="match status" value="1"/>
</dbReference>
<dbReference type="InterPro" id="IPR020621">
    <property type="entry name" value="ATP-PRT_HisG_long"/>
</dbReference>
<dbReference type="InterPro" id="IPR013820">
    <property type="entry name" value="ATP_PRibTrfase_cat"/>
</dbReference>
<dbReference type="InterPro" id="IPR018198">
    <property type="entry name" value="ATP_PRibTrfase_CS"/>
</dbReference>
<dbReference type="InterPro" id="IPR001348">
    <property type="entry name" value="ATP_PRibTrfase_HisG"/>
</dbReference>
<dbReference type="InterPro" id="IPR013115">
    <property type="entry name" value="HisG_C"/>
</dbReference>
<dbReference type="InterPro" id="IPR011322">
    <property type="entry name" value="N-reg_PII-like_a/b"/>
</dbReference>
<dbReference type="InterPro" id="IPR015867">
    <property type="entry name" value="N-reg_PII/ATP_PRibTrfase_C"/>
</dbReference>
<dbReference type="NCBIfam" id="TIGR00070">
    <property type="entry name" value="hisG"/>
    <property type="match status" value="1"/>
</dbReference>
<dbReference type="NCBIfam" id="TIGR03455">
    <property type="entry name" value="HisG_C-term"/>
    <property type="match status" value="1"/>
</dbReference>
<dbReference type="PANTHER" id="PTHR21403:SF10">
    <property type="entry name" value="ATP PHOSPHORIBOSYLTRANSFERASE"/>
    <property type="match status" value="1"/>
</dbReference>
<dbReference type="PANTHER" id="PTHR21403">
    <property type="entry name" value="ATP PHOSPHORIBOSYLTRANSFERASE ATP-PRTASE"/>
    <property type="match status" value="1"/>
</dbReference>
<dbReference type="Pfam" id="PF01634">
    <property type="entry name" value="HisG"/>
    <property type="match status" value="1"/>
</dbReference>
<dbReference type="Pfam" id="PF08029">
    <property type="entry name" value="HisG_C"/>
    <property type="match status" value="1"/>
</dbReference>
<dbReference type="SUPFAM" id="SSF54913">
    <property type="entry name" value="GlnB-like"/>
    <property type="match status" value="1"/>
</dbReference>
<dbReference type="SUPFAM" id="SSF53850">
    <property type="entry name" value="Periplasmic binding protein-like II"/>
    <property type="match status" value="1"/>
</dbReference>
<dbReference type="PROSITE" id="PS01316">
    <property type="entry name" value="ATP_P_PHORIBOSYLTR"/>
    <property type="match status" value="1"/>
</dbReference>